<gene>
    <name evidence="1" type="primary">glmS</name>
    <name type="ordered locus">BRA0582</name>
    <name type="ordered locus">BS1330_II0577</name>
</gene>
<comment type="function">
    <text evidence="1">Catalyzes the first step in hexosamine metabolism, converting fructose-6P into glucosamine-6P using glutamine as a nitrogen source.</text>
</comment>
<comment type="catalytic activity">
    <reaction evidence="1">
        <text>D-fructose 6-phosphate + L-glutamine = D-glucosamine 6-phosphate + L-glutamate</text>
        <dbReference type="Rhea" id="RHEA:13237"/>
        <dbReference type="ChEBI" id="CHEBI:29985"/>
        <dbReference type="ChEBI" id="CHEBI:58359"/>
        <dbReference type="ChEBI" id="CHEBI:58725"/>
        <dbReference type="ChEBI" id="CHEBI:61527"/>
        <dbReference type="EC" id="2.6.1.16"/>
    </reaction>
</comment>
<comment type="subunit">
    <text evidence="1">Homodimer.</text>
</comment>
<comment type="subcellular location">
    <subcellularLocation>
        <location evidence="1">Cytoplasm</location>
    </subcellularLocation>
</comment>
<accession>Q8CY30</accession>
<accession>G0KCW0</accession>
<reference key="1">
    <citation type="journal article" date="2002" name="Proc. Natl. Acad. Sci. U.S.A.">
        <title>The Brucella suis genome reveals fundamental similarities between animal and plant pathogens and symbionts.</title>
        <authorList>
            <person name="Paulsen I.T."/>
            <person name="Seshadri R."/>
            <person name="Nelson K.E."/>
            <person name="Eisen J.A."/>
            <person name="Heidelberg J.F."/>
            <person name="Read T.D."/>
            <person name="Dodson R.J."/>
            <person name="Umayam L.A."/>
            <person name="Brinkac L.M."/>
            <person name="Beanan M.J."/>
            <person name="Daugherty S.C."/>
            <person name="DeBoy R.T."/>
            <person name="Durkin A.S."/>
            <person name="Kolonay J.F."/>
            <person name="Madupu R."/>
            <person name="Nelson W.C."/>
            <person name="Ayodeji B."/>
            <person name="Kraul M."/>
            <person name="Shetty J."/>
            <person name="Malek J.A."/>
            <person name="Van Aken S.E."/>
            <person name="Riedmuller S."/>
            <person name="Tettelin H."/>
            <person name="Gill S.R."/>
            <person name="White O."/>
            <person name="Salzberg S.L."/>
            <person name="Hoover D.L."/>
            <person name="Lindler L.E."/>
            <person name="Halling S.M."/>
            <person name="Boyle S.M."/>
            <person name="Fraser C.M."/>
        </authorList>
    </citation>
    <scope>NUCLEOTIDE SEQUENCE [LARGE SCALE GENOMIC DNA]</scope>
    <source>
        <strain>1330</strain>
    </source>
</reference>
<reference key="2">
    <citation type="journal article" date="2011" name="J. Bacteriol.">
        <title>Revised genome sequence of Brucella suis 1330.</title>
        <authorList>
            <person name="Tae H."/>
            <person name="Shallom S."/>
            <person name="Settlage R."/>
            <person name="Preston D."/>
            <person name="Adams L.G."/>
            <person name="Garner H.R."/>
        </authorList>
    </citation>
    <scope>NUCLEOTIDE SEQUENCE [LARGE SCALE GENOMIC DNA]</scope>
    <source>
        <strain>1330</strain>
    </source>
</reference>
<name>GLMS_BRUSU</name>
<evidence type="ECO:0000255" key="1">
    <source>
        <dbReference type="HAMAP-Rule" id="MF_00164"/>
    </source>
</evidence>
<keyword id="KW-0032">Aminotransferase</keyword>
<keyword id="KW-0963">Cytoplasm</keyword>
<keyword id="KW-0315">Glutamine amidotransferase</keyword>
<keyword id="KW-0677">Repeat</keyword>
<keyword id="KW-0808">Transferase</keyword>
<organism>
    <name type="scientific">Brucella suis biovar 1 (strain 1330)</name>
    <dbReference type="NCBI Taxonomy" id="204722"/>
    <lineage>
        <taxon>Bacteria</taxon>
        <taxon>Pseudomonadati</taxon>
        <taxon>Pseudomonadota</taxon>
        <taxon>Alphaproteobacteria</taxon>
        <taxon>Hyphomicrobiales</taxon>
        <taxon>Brucellaceae</taxon>
        <taxon>Brucella/Ochrobactrum group</taxon>
        <taxon>Brucella</taxon>
    </lineage>
</organism>
<protein>
    <recommendedName>
        <fullName evidence="1">Glutamine--fructose-6-phosphate aminotransferase [isomerizing]</fullName>
        <ecNumber evidence="1">2.6.1.16</ecNumber>
    </recommendedName>
    <alternativeName>
        <fullName evidence="1">D-fructose-6-phosphate amidotransferase</fullName>
    </alternativeName>
    <alternativeName>
        <fullName evidence="1">GFAT</fullName>
    </alternativeName>
    <alternativeName>
        <fullName evidence="1">Glucosamine-6-phosphate synthase</fullName>
    </alternativeName>
    <alternativeName>
        <fullName evidence="1">Hexosephosphate aminotransferase</fullName>
    </alternativeName>
    <alternativeName>
        <fullName evidence="1">L-glutamine--D-fructose-6-phosphate amidotransferase</fullName>
    </alternativeName>
</protein>
<dbReference type="EC" id="2.6.1.16" evidence="1"/>
<dbReference type="EMBL" id="AE014292">
    <property type="protein sequence ID" value="AAN33771.1"/>
    <property type="molecule type" value="Genomic_DNA"/>
</dbReference>
<dbReference type="EMBL" id="CP002998">
    <property type="protein sequence ID" value="AEM20048.1"/>
    <property type="molecule type" value="Genomic_DNA"/>
</dbReference>
<dbReference type="RefSeq" id="WP_004689005.1">
    <property type="nucleotide sequence ID" value="NZ_KN046805.1"/>
</dbReference>
<dbReference type="SMR" id="Q8CY30"/>
<dbReference type="GeneID" id="97535294"/>
<dbReference type="KEGG" id="bms:BRA0582"/>
<dbReference type="KEGG" id="bsi:BS1330_II0577"/>
<dbReference type="PATRIC" id="fig|204722.21.peg.560"/>
<dbReference type="HOGENOM" id="CLU_012520_5_2_5"/>
<dbReference type="PhylomeDB" id="Q8CY30"/>
<dbReference type="Proteomes" id="UP000007104">
    <property type="component" value="Chromosome II"/>
</dbReference>
<dbReference type="GO" id="GO:0005829">
    <property type="term" value="C:cytosol"/>
    <property type="evidence" value="ECO:0007669"/>
    <property type="project" value="TreeGrafter"/>
</dbReference>
<dbReference type="GO" id="GO:0097367">
    <property type="term" value="F:carbohydrate derivative binding"/>
    <property type="evidence" value="ECO:0007669"/>
    <property type="project" value="InterPro"/>
</dbReference>
<dbReference type="GO" id="GO:0004360">
    <property type="term" value="F:glutamine-fructose-6-phosphate transaminase (isomerizing) activity"/>
    <property type="evidence" value="ECO:0007669"/>
    <property type="project" value="UniProtKB-UniRule"/>
</dbReference>
<dbReference type="GO" id="GO:0005975">
    <property type="term" value="P:carbohydrate metabolic process"/>
    <property type="evidence" value="ECO:0007669"/>
    <property type="project" value="UniProtKB-UniRule"/>
</dbReference>
<dbReference type="GO" id="GO:0006002">
    <property type="term" value="P:fructose 6-phosphate metabolic process"/>
    <property type="evidence" value="ECO:0007669"/>
    <property type="project" value="TreeGrafter"/>
</dbReference>
<dbReference type="GO" id="GO:0006487">
    <property type="term" value="P:protein N-linked glycosylation"/>
    <property type="evidence" value="ECO:0007669"/>
    <property type="project" value="TreeGrafter"/>
</dbReference>
<dbReference type="GO" id="GO:0006047">
    <property type="term" value="P:UDP-N-acetylglucosamine metabolic process"/>
    <property type="evidence" value="ECO:0007669"/>
    <property type="project" value="TreeGrafter"/>
</dbReference>
<dbReference type="CDD" id="cd00714">
    <property type="entry name" value="GFAT"/>
    <property type="match status" value="1"/>
</dbReference>
<dbReference type="CDD" id="cd05008">
    <property type="entry name" value="SIS_GlmS_GlmD_1"/>
    <property type="match status" value="1"/>
</dbReference>
<dbReference type="CDD" id="cd05009">
    <property type="entry name" value="SIS_GlmS_GlmD_2"/>
    <property type="match status" value="1"/>
</dbReference>
<dbReference type="FunFam" id="3.40.50.10490:FF:000001">
    <property type="entry name" value="Glutamine--fructose-6-phosphate aminotransferase [isomerizing]"/>
    <property type="match status" value="1"/>
</dbReference>
<dbReference type="FunFam" id="3.40.50.10490:FF:000002">
    <property type="entry name" value="Glutamine--fructose-6-phosphate aminotransferase [isomerizing]"/>
    <property type="match status" value="1"/>
</dbReference>
<dbReference type="FunFam" id="3.60.20.10:FF:000006">
    <property type="entry name" value="Glutamine--fructose-6-phosphate aminotransferase [isomerizing]"/>
    <property type="match status" value="1"/>
</dbReference>
<dbReference type="Gene3D" id="3.40.50.10490">
    <property type="entry name" value="Glucose-6-phosphate isomerase like protein, domain 1"/>
    <property type="match status" value="2"/>
</dbReference>
<dbReference type="Gene3D" id="3.60.20.10">
    <property type="entry name" value="Glutamine Phosphoribosylpyrophosphate, subunit 1, domain 1"/>
    <property type="match status" value="1"/>
</dbReference>
<dbReference type="HAMAP" id="MF_00164">
    <property type="entry name" value="GlmS"/>
    <property type="match status" value="1"/>
</dbReference>
<dbReference type="InterPro" id="IPR017932">
    <property type="entry name" value="GATase_2_dom"/>
</dbReference>
<dbReference type="InterPro" id="IPR005855">
    <property type="entry name" value="GFAT"/>
</dbReference>
<dbReference type="InterPro" id="IPR047084">
    <property type="entry name" value="GFAT_N"/>
</dbReference>
<dbReference type="InterPro" id="IPR035466">
    <property type="entry name" value="GlmS/AgaS_SIS"/>
</dbReference>
<dbReference type="InterPro" id="IPR035490">
    <property type="entry name" value="GlmS/FrlB_SIS"/>
</dbReference>
<dbReference type="InterPro" id="IPR029055">
    <property type="entry name" value="Ntn_hydrolases_N"/>
</dbReference>
<dbReference type="InterPro" id="IPR001347">
    <property type="entry name" value="SIS_dom"/>
</dbReference>
<dbReference type="InterPro" id="IPR046348">
    <property type="entry name" value="SIS_dom_sf"/>
</dbReference>
<dbReference type="NCBIfam" id="TIGR01135">
    <property type="entry name" value="glmS"/>
    <property type="match status" value="1"/>
</dbReference>
<dbReference type="NCBIfam" id="NF001484">
    <property type="entry name" value="PRK00331.1"/>
    <property type="match status" value="1"/>
</dbReference>
<dbReference type="PANTHER" id="PTHR10937">
    <property type="entry name" value="GLUCOSAMINE--FRUCTOSE-6-PHOSPHATE AMINOTRANSFERASE, ISOMERIZING"/>
    <property type="match status" value="1"/>
</dbReference>
<dbReference type="PANTHER" id="PTHR10937:SF0">
    <property type="entry name" value="GLUTAMINE--FRUCTOSE-6-PHOSPHATE TRANSAMINASE (ISOMERIZING)"/>
    <property type="match status" value="1"/>
</dbReference>
<dbReference type="Pfam" id="PF13522">
    <property type="entry name" value="GATase_6"/>
    <property type="match status" value="1"/>
</dbReference>
<dbReference type="Pfam" id="PF01380">
    <property type="entry name" value="SIS"/>
    <property type="match status" value="2"/>
</dbReference>
<dbReference type="SUPFAM" id="SSF56235">
    <property type="entry name" value="N-terminal nucleophile aminohydrolases (Ntn hydrolases)"/>
    <property type="match status" value="1"/>
</dbReference>
<dbReference type="SUPFAM" id="SSF53697">
    <property type="entry name" value="SIS domain"/>
    <property type="match status" value="1"/>
</dbReference>
<dbReference type="PROSITE" id="PS51278">
    <property type="entry name" value="GATASE_TYPE_2"/>
    <property type="match status" value="1"/>
</dbReference>
<dbReference type="PROSITE" id="PS51464">
    <property type="entry name" value="SIS"/>
    <property type="match status" value="2"/>
</dbReference>
<feature type="initiator methionine" description="Removed" evidence="1">
    <location>
        <position position="1"/>
    </location>
</feature>
<feature type="chain" id="PRO_0000135310" description="Glutamine--fructose-6-phosphate aminotransferase [isomerizing]">
    <location>
        <begin position="2"/>
        <end position="607"/>
    </location>
</feature>
<feature type="domain" description="Glutamine amidotransferase type-2" evidence="1">
    <location>
        <begin position="2"/>
        <end position="217"/>
    </location>
</feature>
<feature type="domain" description="SIS 1" evidence="1">
    <location>
        <begin position="283"/>
        <end position="422"/>
    </location>
</feature>
<feature type="domain" description="SIS 2" evidence="1">
    <location>
        <begin position="455"/>
        <end position="597"/>
    </location>
</feature>
<feature type="active site" description="Nucleophile; for GATase activity" evidence="1">
    <location>
        <position position="2"/>
    </location>
</feature>
<feature type="active site" description="For Fru-6P isomerization activity" evidence="1">
    <location>
        <position position="602"/>
    </location>
</feature>
<sequence>MCGIIGIIGNDEVAPRLVDALKRLEYRGYDSAGIATLQNGRLDRRRAEGKLVNLEKRLAGEPLPGVIGIGHTRWATHGRPVERNAHPHITTRLAVVHNGIIENFAELRAMLEAEGRKFETETDTEAVAHLVTRELEKGKSPVEAVRDCLPHLKGAFALAFLFEGDEELLIGARQGPPLAVGYGEGEMFLGSDAIALAPFTDTISYLEDGDWAVLTRNGVSIYDENNKPVERPVQKSQNTNMLVSKGNHRHFMQKEMFEQPEVISHTLANYLDFTTGKVRKEAIGIDFSKVDRLTITACGTAYYAATVAKYWFEQIARLPVDSDIASEFRYREMPLSKDSLAMFVSQSGETADTLASLRYCKAQGLKIASVVNVTGSTIARESDAVFPTLAGPEIGVASTKAFTCQLSAMASLAIAAARARGAIDEVREQELVHQLSEAPRFINQVLKLEDQIAAVCHDLSKVNHVLYLGRGTSFPLAMEGALKLKEISYIHAEGYAAGELKHGPIALIDETMPVIVIAPSDRLYEKTVSNMQEVAARGGRIILITDKKGAESASIDTMATIVLPEVPEFISPLVYALPIQMLAYHTAVLMGTDVDQPRNLAKSVTVE</sequence>
<proteinExistence type="inferred from homology"/>